<organism>
    <name type="scientific">Rhizobium johnstonii (strain DSM 114642 / LMG 32736 / 3841)</name>
    <name type="common">Rhizobium leguminosarum bv. viciae</name>
    <dbReference type="NCBI Taxonomy" id="216596"/>
    <lineage>
        <taxon>Bacteria</taxon>
        <taxon>Pseudomonadati</taxon>
        <taxon>Pseudomonadota</taxon>
        <taxon>Alphaproteobacteria</taxon>
        <taxon>Hyphomicrobiales</taxon>
        <taxon>Rhizobiaceae</taxon>
        <taxon>Rhizobium/Agrobacterium group</taxon>
        <taxon>Rhizobium</taxon>
        <taxon>Rhizobium johnstonii</taxon>
    </lineage>
</organism>
<accession>Q1MMC3</accession>
<keyword id="KW-0489">Methyltransferase</keyword>
<keyword id="KW-0949">S-adenosyl-L-methionine</keyword>
<keyword id="KW-0808">Transferase</keyword>
<keyword id="KW-0819">tRNA processing</keyword>
<proteinExistence type="inferred from homology"/>
<protein>
    <recommendedName>
        <fullName evidence="2">tRNA (guanine-N(7)-)-methyltransferase</fullName>
        <ecNumber evidence="2">2.1.1.33</ecNumber>
    </recommendedName>
    <alternativeName>
        <fullName evidence="2">tRNA (guanine(46)-N(7))-methyltransferase</fullName>
    </alternativeName>
    <alternativeName>
        <fullName evidence="2">tRNA(m7G46)-methyltransferase</fullName>
    </alternativeName>
</protein>
<gene>
    <name evidence="2" type="primary">trmB</name>
    <name type="ordered locus">RL0388</name>
</gene>
<name>TRMB_RHIJ3</name>
<dbReference type="EC" id="2.1.1.33" evidence="2"/>
<dbReference type="EMBL" id="AM236080">
    <property type="protein sequence ID" value="CAK05879.1"/>
    <property type="molecule type" value="Genomic_DNA"/>
</dbReference>
<dbReference type="RefSeq" id="WP_011650187.1">
    <property type="nucleotide sequence ID" value="NC_008380.1"/>
</dbReference>
<dbReference type="SMR" id="Q1MMC3"/>
<dbReference type="EnsemblBacteria" id="CAK05879">
    <property type="protein sequence ID" value="CAK05879"/>
    <property type="gene ID" value="RL0388"/>
</dbReference>
<dbReference type="KEGG" id="rle:RL0388"/>
<dbReference type="eggNOG" id="COG0220">
    <property type="taxonomic scope" value="Bacteria"/>
</dbReference>
<dbReference type="HOGENOM" id="CLU_050910_0_3_5"/>
<dbReference type="UniPathway" id="UPA00989"/>
<dbReference type="Proteomes" id="UP000006575">
    <property type="component" value="Chromosome"/>
</dbReference>
<dbReference type="GO" id="GO:0043527">
    <property type="term" value="C:tRNA methyltransferase complex"/>
    <property type="evidence" value="ECO:0007669"/>
    <property type="project" value="TreeGrafter"/>
</dbReference>
<dbReference type="GO" id="GO:0008176">
    <property type="term" value="F:tRNA (guanine(46)-N7)-methyltransferase activity"/>
    <property type="evidence" value="ECO:0007669"/>
    <property type="project" value="UniProtKB-UniRule"/>
</dbReference>
<dbReference type="CDD" id="cd02440">
    <property type="entry name" value="AdoMet_MTases"/>
    <property type="match status" value="1"/>
</dbReference>
<dbReference type="Gene3D" id="3.40.50.150">
    <property type="entry name" value="Vaccinia Virus protein VP39"/>
    <property type="match status" value="1"/>
</dbReference>
<dbReference type="HAMAP" id="MF_01057">
    <property type="entry name" value="tRNA_methyltr_TrmB"/>
    <property type="match status" value="1"/>
</dbReference>
<dbReference type="InterPro" id="IPR029063">
    <property type="entry name" value="SAM-dependent_MTases_sf"/>
</dbReference>
<dbReference type="InterPro" id="IPR003358">
    <property type="entry name" value="tRNA_(Gua-N-7)_MeTrfase_Trmb"/>
</dbReference>
<dbReference type="InterPro" id="IPR055361">
    <property type="entry name" value="tRNA_methyltr_TrmB_bact"/>
</dbReference>
<dbReference type="PANTHER" id="PTHR23417">
    <property type="entry name" value="3-DEOXY-D-MANNO-OCTULOSONIC-ACID TRANSFERASE/TRNA GUANINE-N 7 - -METHYLTRANSFERASE"/>
    <property type="match status" value="1"/>
</dbReference>
<dbReference type="PANTHER" id="PTHR23417:SF14">
    <property type="entry name" value="PENTACOTRIPEPTIDE-REPEAT REGION OF PRORP DOMAIN-CONTAINING PROTEIN"/>
    <property type="match status" value="1"/>
</dbReference>
<dbReference type="Pfam" id="PF02390">
    <property type="entry name" value="Methyltransf_4"/>
    <property type="match status" value="1"/>
</dbReference>
<dbReference type="SUPFAM" id="SSF53335">
    <property type="entry name" value="S-adenosyl-L-methionine-dependent methyltransferases"/>
    <property type="match status" value="1"/>
</dbReference>
<dbReference type="PROSITE" id="PS51625">
    <property type="entry name" value="SAM_MT_TRMB"/>
    <property type="match status" value="1"/>
</dbReference>
<feature type="chain" id="PRO_0000288210" description="tRNA (guanine-N(7)-)-methyltransferase">
    <location>
        <begin position="1"/>
        <end position="233"/>
    </location>
</feature>
<feature type="active site" evidence="1">
    <location>
        <position position="138"/>
    </location>
</feature>
<feature type="binding site" evidence="2">
    <location>
        <position position="64"/>
    </location>
    <ligand>
        <name>S-adenosyl-L-methionine</name>
        <dbReference type="ChEBI" id="CHEBI:59789"/>
    </ligand>
</feature>
<feature type="binding site" evidence="2">
    <location>
        <position position="89"/>
    </location>
    <ligand>
        <name>S-adenosyl-L-methionine</name>
        <dbReference type="ChEBI" id="CHEBI:59789"/>
    </ligand>
</feature>
<feature type="binding site" evidence="2">
    <location>
        <position position="116"/>
    </location>
    <ligand>
        <name>S-adenosyl-L-methionine</name>
        <dbReference type="ChEBI" id="CHEBI:59789"/>
    </ligand>
</feature>
<feature type="binding site" evidence="2">
    <location>
        <position position="138"/>
    </location>
    <ligand>
        <name>S-adenosyl-L-methionine</name>
        <dbReference type="ChEBI" id="CHEBI:59789"/>
    </ligand>
</feature>
<feature type="binding site" evidence="2">
    <location>
        <position position="142"/>
    </location>
    <ligand>
        <name>substrate</name>
    </ligand>
</feature>
<feature type="binding site" evidence="2">
    <location>
        <position position="174"/>
    </location>
    <ligand>
        <name>substrate</name>
    </ligand>
</feature>
<feature type="binding site" evidence="2">
    <location>
        <begin position="212"/>
        <end position="215"/>
    </location>
    <ligand>
        <name>substrate</name>
    </ligand>
</feature>
<evidence type="ECO:0000250" key="1"/>
<evidence type="ECO:0000255" key="2">
    <source>
        <dbReference type="HAMAP-Rule" id="MF_01057"/>
    </source>
</evidence>
<comment type="function">
    <text evidence="2">Catalyzes the formation of N(7)-methylguanine at position 46 (m7G46) in tRNA.</text>
</comment>
<comment type="catalytic activity">
    <reaction evidence="2">
        <text>guanosine(46) in tRNA + S-adenosyl-L-methionine = N(7)-methylguanosine(46) in tRNA + S-adenosyl-L-homocysteine</text>
        <dbReference type="Rhea" id="RHEA:42708"/>
        <dbReference type="Rhea" id="RHEA-COMP:10188"/>
        <dbReference type="Rhea" id="RHEA-COMP:10189"/>
        <dbReference type="ChEBI" id="CHEBI:57856"/>
        <dbReference type="ChEBI" id="CHEBI:59789"/>
        <dbReference type="ChEBI" id="CHEBI:74269"/>
        <dbReference type="ChEBI" id="CHEBI:74480"/>
        <dbReference type="EC" id="2.1.1.33"/>
    </reaction>
</comment>
<comment type="pathway">
    <text evidence="2">tRNA modification; N(7)-methylguanine-tRNA biosynthesis.</text>
</comment>
<comment type="similarity">
    <text evidence="2">Belongs to the class I-like SAM-binding methyltransferase superfamily. TrmB family.</text>
</comment>
<reference key="1">
    <citation type="journal article" date="2006" name="Genome Biol.">
        <title>The genome of Rhizobium leguminosarum has recognizable core and accessory components.</title>
        <authorList>
            <person name="Young J.P.W."/>
            <person name="Crossman L.C."/>
            <person name="Johnston A.W.B."/>
            <person name="Thomson N.R."/>
            <person name="Ghazoui Z.F."/>
            <person name="Hull K.H."/>
            <person name="Wexler M."/>
            <person name="Curson A.R.J."/>
            <person name="Todd J.D."/>
            <person name="Poole P.S."/>
            <person name="Mauchline T.H."/>
            <person name="East A.K."/>
            <person name="Quail M.A."/>
            <person name="Churcher C."/>
            <person name="Arrowsmith C."/>
            <person name="Cherevach I."/>
            <person name="Chillingworth T."/>
            <person name="Clarke K."/>
            <person name="Cronin A."/>
            <person name="Davis P."/>
            <person name="Fraser A."/>
            <person name="Hance Z."/>
            <person name="Hauser H."/>
            <person name="Jagels K."/>
            <person name="Moule S."/>
            <person name="Mungall K."/>
            <person name="Norbertczak H."/>
            <person name="Rabbinowitsch E."/>
            <person name="Sanders M."/>
            <person name="Simmonds M."/>
            <person name="Whitehead S."/>
            <person name="Parkhill J."/>
        </authorList>
    </citation>
    <scope>NUCLEOTIDE SEQUENCE [LARGE SCALE GENOMIC DNA]</scope>
    <source>
        <strain>DSM 114642 / LMG 32736 / 3841</strain>
    </source>
</reference>
<sequence>MTDMERRGRATEAFFGRRKGKALREQQAETLNSLLPAFLIDLSAAPPEPLTSLFPVPVERLRLEIGFGGGEHLIHRALETPSTGFIGVEPFVNSMQKLLSRIGETGASNIRVYNDDATQLLDWLPDGALDQIDLLYPDPWPKRKHWKRRFVSKTNLDRFHRVLKPGGLFCFASDIDTYVNWTLIKCRDHGGFEWIADNAADWLTPYEGWPSTRYEAKARREGRSSAYLTFRKV</sequence>